<gene>
    <name evidence="6" type="ORF">EAG_11727</name>
</gene>
<name>FMRF_CAMFO</name>
<dbReference type="EMBL" id="GL435343">
    <property type="protein sequence ID" value="EFN73451.1"/>
    <property type="molecule type" value="Genomic_DNA"/>
</dbReference>
<dbReference type="STRING" id="104421.E1ZZF9"/>
<dbReference type="EnsemblMetazoa" id="XM_011269977.3">
    <property type="protein sequence ID" value="XP_011268279.1"/>
    <property type="gene ID" value="LOC105258618"/>
</dbReference>
<dbReference type="OMA" id="AMAFFCN"/>
<dbReference type="OrthoDB" id="7667989at2759"/>
<dbReference type="Proteomes" id="UP000000311">
    <property type="component" value="Unassembled WGS sequence"/>
</dbReference>
<dbReference type="GO" id="GO:0005576">
    <property type="term" value="C:extracellular region"/>
    <property type="evidence" value="ECO:0007669"/>
    <property type="project" value="UniProtKB-SubCell"/>
</dbReference>
<dbReference type="GO" id="GO:0007218">
    <property type="term" value="P:neuropeptide signaling pathway"/>
    <property type="evidence" value="ECO:0007669"/>
    <property type="project" value="UniProtKB-KW"/>
</dbReference>
<comment type="function">
    <text evidence="1">In insects, FMRFamide and related peptides have modulatory actions at skeletal neuromuscular junctions, and peptides that are immunologically related to FMRFamide are released into the circulation from neurohemal organs.</text>
</comment>
<comment type="subcellular location">
    <subcellularLocation>
        <location evidence="5">Secreted</location>
    </subcellularLocation>
</comment>
<comment type="tissue specificity">
    <text evidence="2">Expressed throughout the central nervous system.</text>
</comment>
<comment type="mass spectrometry">
    <molecule>FMRFamide 1</molecule>
</comment>
<comment type="mass spectrometry">
    <molecule>FMRFamide 2</molecule>
</comment>
<comment type="mass spectrometry">
    <molecule>FMRFamide 3</molecule>
</comment>
<comment type="similarity">
    <text evidence="4">Belongs to the FARP (FMRFamide related peptide) family.</text>
</comment>
<organism>
    <name type="scientific">Camponotus floridanus</name>
    <name type="common">Florida carpenter ant</name>
    <dbReference type="NCBI Taxonomy" id="104421"/>
    <lineage>
        <taxon>Eukaryota</taxon>
        <taxon>Metazoa</taxon>
        <taxon>Ecdysozoa</taxon>
        <taxon>Arthropoda</taxon>
        <taxon>Hexapoda</taxon>
        <taxon>Insecta</taxon>
        <taxon>Pterygota</taxon>
        <taxon>Neoptera</taxon>
        <taxon>Endopterygota</taxon>
        <taxon>Hymenoptera</taxon>
        <taxon>Apocrita</taxon>
        <taxon>Aculeata</taxon>
        <taxon>Formicoidea</taxon>
        <taxon>Formicidae</taxon>
        <taxon>Formicinae</taxon>
        <taxon>Camponotus</taxon>
    </lineage>
</organism>
<protein>
    <recommendedName>
        <fullName evidence="5">FMRFamide-related peptides</fullName>
    </recommendedName>
    <component>
        <recommendedName>
            <fullName evidence="3">FMRFamide 1</fullName>
        </recommendedName>
        <alternativeName>
            <fullName evidence="5">STMGSSFIRF-amide</fullName>
        </alternativeName>
    </component>
    <component>
        <recommendedName>
            <fullName evidence="3">FMRFamide 2</fullName>
        </recommendedName>
        <alternativeName>
            <fullName evidence="5">WKSPDIVIRF-amide</fullName>
        </alternativeName>
    </component>
    <component>
        <recommendedName>
            <fullName evidence="3">FMRFamide 3</fullName>
        </recommendedName>
        <alternativeName>
            <fullName evidence="5">GKNDLNFIRF-amide</fullName>
        </alternativeName>
    </component>
</protein>
<accession>E1ZZF9</accession>
<reference key="1">
    <citation type="journal article" date="2010" name="Science">
        <title>Genomic comparison of the ants Camponotus floridanus and Harpegnathos saltator.</title>
        <authorList>
            <person name="Bonasio R."/>
            <person name="Zhang G."/>
            <person name="Ye C."/>
            <person name="Mutti N.S."/>
            <person name="Fang X."/>
            <person name="Qin N."/>
            <person name="Donahue G."/>
            <person name="Yang P."/>
            <person name="Li Q."/>
            <person name="Li C."/>
            <person name="Zhang P."/>
            <person name="Huang Z."/>
            <person name="Berger S.L."/>
            <person name="Reinberg D."/>
            <person name="Wang J."/>
            <person name="Liebig J."/>
        </authorList>
    </citation>
    <scope>NUCLEOTIDE SEQUENCE [LARGE SCALE GENOMIC DNA]</scope>
</reference>
<reference evidence="4" key="2">
    <citation type="journal article" date="2015" name="J. Proteome Res.">
        <title>Neuropeptidomics of the carpenter ant Camponotus floridanus.</title>
        <authorList>
            <person name="Schmitt F."/>
            <person name="Vanselow J.T."/>
            <person name="Schlosser A."/>
            <person name="Kahnt J."/>
            <person name="Roessler W."/>
            <person name="Wegener C."/>
        </authorList>
    </citation>
    <scope>PROTEIN SEQUENCE OF 47-56; 85-94 AND 110-119</scope>
    <scope>TISSUE SPECIFICITY</scope>
    <scope>MASS SPECTROMETRY</scope>
    <scope>IDENTIFICATION BY MASS SPECTROMETRY</scope>
    <scope>AMIDATION AT PHE-56; PHE-94 AND PHE-119</scope>
</reference>
<evidence type="ECO:0000250" key="1">
    <source>
        <dbReference type="UniProtKB" id="P10552"/>
    </source>
</evidence>
<evidence type="ECO:0000269" key="2">
    <source>
    </source>
</evidence>
<evidence type="ECO:0000303" key="3">
    <source>
    </source>
</evidence>
<evidence type="ECO:0000305" key="4"/>
<evidence type="ECO:0000305" key="5">
    <source>
    </source>
</evidence>
<evidence type="ECO:0000312" key="6">
    <source>
        <dbReference type="EMBL" id="EFN73451.1"/>
    </source>
</evidence>
<sequence>MLVSSSVLKDDSSLRIFKESPNEFEYIIKRHDMDDRKEDTESKERRSTMGSSFIRFGRGQSFFNNLDNSAFDNEIDSKVSRHPRWKSPDIVIRFGRSGMKSTNDEQPKRGKNDLNFIRFGRNIQIVPTDFDLSAVCSALMSNDAISDAGLHPDVTRLFRLCNNLNKITGEISLDSLETNSNHRE</sequence>
<keyword id="KW-0027">Amidation</keyword>
<keyword id="KW-0165">Cleavage on pair of basic residues</keyword>
<keyword id="KW-0903">Direct protein sequencing</keyword>
<keyword id="KW-0527">Neuropeptide</keyword>
<keyword id="KW-1185">Reference proteome</keyword>
<keyword id="KW-0964">Secreted</keyword>
<feature type="chain" id="PRO_0000434212" description="FMRFamide-related peptides">
    <location>
        <begin position="1"/>
        <end position="184"/>
    </location>
</feature>
<feature type="propeptide" id="PRO_0000434213" evidence="5">
    <location>
        <begin position="1"/>
        <end position="44"/>
    </location>
</feature>
<feature type="peptide" id="PRO_0000434214" description="FMRFamide 1" evidence="2">
    <location>
        <begin position="47"/>
        <end position="56"/>
    </location>
</feature>
<feature type="propeptide" id="PRO_0000434215" evidence="5">
    <location>
        <begin position="59"/>
        <end position="83"/>
    </location>
</feature>
<feature type="peptide" id="PRO_0000434216" description="FMRFamide 2" evidence="2">
    <location>
        <begin position="85"/>
        <end position="94"/>
    </location>
</feature>
<feature type="propeptide" id="PRO_0000434217" evidence="5">
    <location>
        <begin position="97"/>
        <end position="107"/>
    </location>
</feature>
<feature type="peptide" id="PRO_0000434218" description="FMRFamide 3" evidence="2">
    <location>
        <begin position="110"/>
        <end position="119"/>
    </location>
</feature>
<feature type="propeptide" id="PRO_0000434219" evidence="5">
    <location>
        <begin position="122"/>
        <end position="184"/>
    </location>
</feature>
<feature type="modified residue" description="Phenylalanine amide" evidence="2">
    <location>
        <position position="56"/>
    </location>
</feature>
<feature type="modified residue" description="Phenylalanine amide" evidence="2">
    <location>
        <position position="94"/>
    </location>
</feature>
<feature type="modified residue" description="Phenylalanine amide" evidence="2">
    <location>
        <position position="119"/>
    </location>
</feature>
<proteinExistence type="evidence at protein level"/>